<comment type="function">
    <text evidence="1">Involved in the biosynthesis of ADP-glucose, a building block required for the elongation reactions to produce glycogen. Catalyzes the reaction between ATP and alpha-D-glucose 1-phosphate (G1P) to produce pyrophosphate and ADP-Glc.</text>
</comment>
<comment type="catalytic activity">
    <reaction evidence="1">
        <text>alpha-D-glucose 1-phosphate + ATP + H(+) = ADP-alpha-D-glucose + diphosphate</text>
        <dbReference type="Rhea" id="RHEA:12120"/>
        <dbReference type="ChEBI" id="CHEBI:15378"/>
        <dbReference type="ChEBI" id="CHEBI:30616"/>
        <dbReference type="ChEBI" id="CHEBI:33019"/>
        <dbReference type="ChEBI" id="CHEBI:57498"/>
        <dbReference type="ChEBI" id="CHEBI:58601"/>
        <dbReference type="EC" id="2.7.7.27"/>
    </reaction>
</comment>
<comment type="pathway">
    <text evidence="1">Glycan biosynthesis; glycogen biosynthesis.</text>
</comment>
<comment type="subunit">
    <text evidence="1">Homotetramer.</text>
</comment>
<comment type="similarity">
    <text evidence="1">Belongs to the bacterial/plant glucose-1-phosphate adenylyltransferase family.</text>
</comment>
<name>GLGC_ALTMD</name>
<evidence type="ECO:0000255" key="1">
    <source>
        <dbReference type="HAMAP-Rule" id="MF_00624"/>
    </source>
</evidence>
<sequence>MADQSSRYISNLTRDTYALILAGGKGSRLHELTTWRAKPALYFGGKFRIIDFPLSNCVNSGIRRIGVVTQYKSHSLIRHLVRGWGHFKKELGESVEILPASQRFSDSWYEGTADAVFQNIDIIRDELPKYVMILSGDHIYRMDYGDMLAKHKESGAKMTVSCMSVPLEEAAGAFGVMSVDENYRINGFEEKPANPTPLPNDPTRCLASMGNYVFDTEFLFEQLRVDSENMGSQRDFGKDIIPSIIADHPVYAYPFEQSGGDNAYWRDVGTIDSFWEANMEMVAPVPQLNLYDRKWPIWTYQEQLPPAKFVWEDHDRRGEAINSVVSGGCIISGSTLRSSICFSNVRVHSYGLIEDAVILPDVEIKRHCKLKRVIIDRGCVIPEGTTIGYDLEQDKARGFRVSEKGVVLVTREMLGQPVGGLSQAPNISITL</sequence>
<accession>B4RS18</accession>
<accession>F2G9E1</accession>
<keyword id="KW-0067">ATP-binding</keyword>
<keyword id="KW-0119">Carbohydrate metabolism</keyword>
<keyword id="KW-0320">Glycogen biosynthesis</keyword>
<keyword id="KW-0321">Glycogen metabolism</keyword>
<keyword id="KW-0547">Nucleotide-binding</keyword>
<keyword id="KW-0548">Nucleotidyltransferase</keyword>
<keyword id="KW-0808">Transferase</keyword>
<dbReference type="EC" id="2.7.7.27" evidence="1"/>
<dbReference type="EMBL" id="CP001103">
    <property type="protein sequence ID" value="AEA97820.1"/>
    <property type="molecule type" value="Genomic_DNA"/>
</dbReference>
<dbReference type="RefSeq" id="WP_012518152.1">
    <property type="nucleotide sequence ID" value="NC_011138.3"/>
</dbReference>
<dbReference type="SMR" id="B4RS18"/>
<dbReference type="KEGG" id="amc:MADE_1008400"/>
<dbReference type="HOGENOM" id="CLU_029499_14_1_6"/>
<dbReference type="UniPathway" id="UPA00164"/>
<dbReference type="Proteomes" id="UP000001870">
    <property type="component" value="Chromosome"/>
</dbReference>
<dbReference type="GO" id="GO:0005524">
    <property type="term" value="F:ATP binding"/>
    <property type="evidence" value="ECO:0007669"/>
    <property type="project" value="UniProtKB-KW"/>
</dbReference>
<dbReference type="GO" id="GO:0008878">
    <property type="term" value="F:glucose-1-phosphate adenylyltransferase activity"/>
    <property type="evidence" value="ECO:0007669"/>
    <property type="project" value="UniProtKB-UniRule"/>
</dbReference>
<dbReference type="GO" id="GO:0005978">
    <property type="term" value="P:glycogen biosynthetic process"/>
    <property type="evidence" value="ECO:0007669"/>
    <property type="project" value="UniProtKB-UniRule"/>
</dbReference>
<dbReference type="CDD" id="cd02508">
    <property type="entry name" value="ADP_Glucose_PP"/>
    <property type="match status" value="1"/>
</dbReference>
<dbReference type="CDD" id="cd04651">
    <property type="entry name" value="LbH_G1P_AT_C"/>
    <property type="match status" value="1"/>
</dbReference>
<dbReference type="Gene3D" id="2.160.10.10">
    <property type="entry name" value="Hexapeptide repeat proteins"/>
    <property type="match status" value="1"/>
</dbReference>
<dbReference type="Gene3D" id="3.90.550.10">
    <property type="entry name" value="Spore Coat Polysaccharide Biosynthesis Protein SpsA, Chain A"/>
    <property type="match status" value="1"/>
</dbReference>
<dbReference type="HAMAP" id="MF_00624">
    <property type="entry name" value="GlgC"/>
    <property type="match status" value="1"/>
</dbReference>
<dbReference type="InterPro" id="IPR011831">
    <property type="entry name" value="ADP-Glc_PPase"/>
</dbReference>
<dbReference type="InterPro" id="IPR005836">
    <property type="entry name" value="ADP_Glu_pyroP_CS"/>
</dbReference>
<dbReference type="InterPro" id="IPR023049">
    <property type="entry name" value="GlgC_bac"/>
</dbReference>
<dbReference type="InterPro" id="IPR056818">
    <property type="entry name" value="GlmU/GlgC-like_hexapep"/>
</dbReference>
<dbReference type="InterPro" id="IPR005835">
    <property type="entry name" value="NTP_transferase_dom"/>
</dbReference>
<dbReference type="InterPro" id="IPR029044">
    <property type="entry name" value="Nucleotide-diphossugar_trans"/>
</dbReference>
<dbReference type="InterPro" id="IPR011004">
    <property type="entry name" value="Trimer_LpxA-like_sf"/>
</dbReference>
<dbReference type="NCBIfam" id="TIGR02091">
    <property type="entry name" value="glgC"/>
    <property type="match status" value="1"/>
</dbReference>
<dbReference type="NCBIfam" id="NF001947">
    <property type="entry name" value="PRK00725.1"/>
    <property type="match status" value="1"/>
</dbReference>
<dbReference type="NCBIfam" id="NF002023">
    <property type="entry name" value="PRK00844.1"/>
    <property type="match status" value="1"/>
</dbReference>
<dbReference type="PANTHER" id="PTHR43523:SF2">
    <property type="entry name" value="GLUCOSE-1-PHOSPHATE ADENYLYLTRANSFERASE"/>
    <property type="match status" value="1"/>
</dbReference>
<dbReference type="PANTHER" id="PTHR43523">
    <property type="entry name" value="GLUCOSE-1-PHOSPHATE ADENYLYLTRANSFERASE-RELATED"/>
    <property type="match status" value="1"/>
</dbReference>
<dbReference type="Pfam" id="PF24894">
    <property type="entry name" value="Hexapep_GlmU"/>
    <property type="match status" value="1"/>
</dbReference>
<dbReference type="Pfam" id="PF00483">
    <property type="entry name" value="NTP_transferase"/>
    <property type="match status" value="1"/>
</dbReference>
<dbReference type="SUPFAM" id="SSF53448">
    <property type="entry name" value="Nucleotide-diphospho-sugar transferases"/>
    <property type="match status" value="1"/>
</dbReference>
<dbReference type="SUPFAM" id="SSF51161">
    <property type="entry name" value="Trimeric LpxA-like enzymes"/>
    <property type="match status" value="1"/>
</dbReference>
<dbReference type="PROSITE" id="PS00808">
    <property type="entry name" value="ADP_GLC_PYROPHOSPH_1"/>
    <property type="match status" value="1"/>
</dbReference>
<dbReference type="PROSITE" id="PS00809">
    <property type="entry name" value="ADP_GLC_PYROPHOSPH_2"/>
    <property type="match status" value="1"/>
</dbReference>
<dbReference type="PROSITE" id="PS00810">
    <property type="entry name" value="ADP_GLC_PYROPHOSPH_3"/>
    <property type="match status" value="1"/>
</dbReference>
<protein>
    <recommendedName>
        <fullName evidence="1">Glucose-1-phosphate adenylyltransferase</fullName>
        <ecNumber evidence="1">2.7.7.27</ecNumber>
    </recommendedName>
    <alternativeName>
        <fullName evidence="1">ADP-glucose pyrophosphorylase</fullName>
        <shortName evidence="1">ADPGlc PPase</shortName>
    </alternativeName>
    <alternativeName>
        <fullName evidence="1">ADP-glucose synthase</fullName>
    </alternativeName>
</protein>
<reference key="1">
    <citation type="journal article" date="2008" name="ISME J.">
        <title>Comparative genomics of two ecotypes of the marine planktonic copiotroph Alteromonas macleodii suggests alternative lifestyles associated with different kinds of particulate organic matter.</title>
        <authorList>
            <person name="Ivars-Martinez E."/>
            <person name="Martin-Cuadrado A.-B."/>
            <person name="D'Auria G."/>
            <person name="Mira A."/>
            <person name="Ferriera S."/>
            <person name="Johnson J."/>
            <person name="Friedman R."/>
            <person name="Rodriguez-Valera F."/>
        </authorList>
    </citation>
    <scope>NUCLEOTIDE SEQUENCE [LARGE SCALE GENOMIC DNA]</scope>
    <source>
        <strain>DSM 17117 / CIP 110805 / LMG 28347 / Deep ecotype</strain>
    </source>
</reference>
<gene>
    <name evidence="1" type="primary">glgC</name>
    <name type="ordered locus">MADE_1008400</name>
</gene>
<feature type="chain" id="PRO_1000130464" description="Glucose-1-phosphate adenylyltransferase">
    <location>
        <begin position="1"/>
        <end position="431"/>
    </location>
</feature>
<feature type="binding site" evidence="1">
    <location>
        <position position="109"/>
    </location>
    <ligand>
        <name>alpha-D-glucose 1-phosphate</name>
        <dbReference type="ChEBI" id="CHEBI:58601"/>
    </ligand>
</feature>
<feature type="binding site" evidence="1">
    <location>
        <position position="175"/>
    </location>
    <ligand>
        <name>alpha-D-glucose 1-phosphate</name>
        <dbReference type="ChEBI" id="CHEBI:58601"/>
    </ligand>
</feature>
<feature type="binding site" evidence="1">
    <location>
        <begin position="190"/>
        <end position="191"/>
    </location>
    <ligand>
        <name>alpha-D-glucose 1-phosphate</name>
        <dbReference type="ChEBI" id="CHEBI:58601"/>
    </ligand>
</feature>
<feature type="binding site" evidence="1">
    <location>
        <position position="208"/>
    </location>
    <ligand>
        <name>alpha-D-glucose 1-phosphate</name>
        <dbReference type="ChEBI" id="CHEBI:58601"/>
    </ligand>
</feature>
<proteinExistence type="inferred from homology"/>
<organism>
    <name type="scientific">Alteromonas mediterranea (strain DSM 17117 / CIP 110805 / LMG 28347 / Deep ecotype)</name>
    <dbReference type="NCBI Taxonomy" id="1774373"/>
    <lineage>
        <taxon>Bacteria</taxon>
        <taxon>Pseudomonadati</taxon>
        <taxon>Pseudomonadota</taxon>
        <taxon>Gammaproteobacteria</taxon>
        <taxon>Alteromonadales</taxon>
        <taxon>Alteromonadaceae</taxon>
        <taxon>Alteromonas/Salinimonas group</taxon>
        <taxon>Alteromonas</taxon>
    </lineage>
</organism>